<reference key="1">
    <citation type="journal article" date="2000" name="Proc. Natl. Acad. Sci. U.S.A.">
        <title>Genome sequence of Halobacterium species NRC-1.</title>
        <authorList>
            <person name="Ng W.V."/>
            <person name="Kennedy S.P."/>
            <person name="Mahairas G.G."/>
            <person name="Berquist B."/>
            <person name="Pan M."/>
            <person name="Shukla H.D."/>
            <person name="Lasky S.R."/>
            <person name="Baliga N.S."/>
            <person name="Thorsson V."/>
            <person name="Sbrogna J."/>
            <person name="Swartzell S."/>
            <person name="Weir D."/>
            <person name="Hall J."/>
            <person name="Dahl T.A."/>
            <person name="Welti R."/>
            <person name="Goo Y.A."/>
            <person name="Leithauser B."/>
            <person name="Keller K."/>
            <person name="Cruz R."/>
            <person name="Danson M.J."/>
            <person name="Hough D.W."/>
            <person name="Maddocks D.G."/>
            <person name="Jablonski P.E."/>
            <person name="Krebs M.P."/>
            <person name="Angevine C.M."/>
            <person name="Dale H."/>
            <person name="Isenbarger T.A."/>
            <person name="Peck R.F."/>
            <person name="Pohlschroder M."/>
            <person name="Spudich J.L."/>
            <person name="Jung K.-H."/>
            <person name="Alam M."/>
            <person name="Freitas T."/>
            <person name="Hou S."/>
            <person name="Daniels C.J."/>
            <person name="Dennis P.P."/>
            <person name="Omer A.D."/>
            <person name="Ebhardt H."/>
            <person name="Lowe T.M."/>
            <person name="Liang P."/>
            <person name="Riley M."/>
            <person name="Hood L."/>
            <person name="DasSarma S."/>
        </authorList>
    </citation>
    <scope>NUCLEOTIDE SEQUENCE [LARGE SCALE GENOMIC DNA]</scope>
    <source>
        <strain>ATCC 700922 / JCM 11081 / NRC-1</strain>
    </source>
</reference>
<sequence length="345" mass="37089">MSDTPQSEPRRSDDRSGADDATAAAAGSTDAAAAAVSSKTGGIAGPPGGPGEVDGDEPAVARTVGESDEQLQDAWTDYEFDGDAKVSVSDLDTYYGEERALESVSLDIPAESVTALIGPSGCGKSTFLRCLNRMNDRIRGARVEGRVALDDRDVYGDGVNLVELRRQVGMVFQEPNPFPKSIRDNISYGPRKHGDLETGLLARLLGRDDRDAERDLVERALRRAALWDEVNDRLGDNALGLSGGQQQRLCIARCLAVDPDVILMDEPASALDPVATAKIEDLIEELAEEYTVVVVTHNMQQAARISDQTAVFLTGGRLAEYDATDAIFQNPQSQRVEDYVAGKFG</sequence>
<dbReference type="EC" id="7.3.2.1" evidence="1"/>
<dbReference type="EMBL" id="AE004437">
    <property type="protein sequence ID" value="AAG20553.1"/>
    <property type="molecule type" value="Genomic_DNA"/>
</dbReference>
<dbReference type="PIR" id="E84398">
    <property type="entry name" value="E84398"/>
</dbReference>
<dbReference type="SMR" id="Q9HML8"/>
<dbReference type="FunCoup" id="Q9HML8">
    <property type="interactions" value="42"/>
</dbReference>
<dbReference type="STRING" id="64091.VNG_2482G"/>
<dbReference type="PaxDb" id="64091-VNG_2482G"/>
<dbReference type="KEGG" id="hal:VNG_2482G"/>
<dbReference type="PATRIC" id="fig|64091.14.peg.1923"/>
<dbReference type="HOGENOM" id="CLU_000604_1_22_2"/>
<dbReference type="InParanoid" id="Q9HML8"/>
<dbReference type="OrthoDB" id="31298at2157"/>
<dbReference type="PhylomeDB" id="Q9HML8"/>
<dbReference type="Proteomes" id="UP000000554">
    <property type="component" value="Chromosome"/>
</dbReference>
<dbReference type="GO" id="GO:0005886">
    <property type="term" value="C:plasma membrane"/>
    <property type="evidence" value="ECO:0007669"/>
    <property type="project" value="UniProtKB-SubCell"/>
</dbReference>
<dbReference type="GO" id="GO:0005524">
    <property type="term" value="F:ATP binding"/>
    <property type="evidence" value="ECO:0007669"/>
    <property type="project" value="UniProtKB-KW"/>
</dbReference>
<dbReference type="GO" id="GO:0016887">
    <property type="term" value="F:ATP hydrolysis activity"/>
    <property type="evidence" value="ECO:0007669"/>
    <property type="project" value="InterPro"/>
</dbReference>
<dbReference type="GO" id="GO:0015415">
    <property type="term" value="F:ATPase-coupled phosphate ion transmembrane transporter activity"/>
    <property type="evidence" value="ECO:0007669"/>
    <property type="project" value="UniProtKB-EC"/>
</dbReference>
<dbReference type="GO" id="GO:0035435">
    <property type="term" value="P:phosphate ion transmembrane transport"/>
    <property type="evidence" value="ECO:0007669"/>
    <property type="project" value="InterPro"/>
</dbReference>
<dbReference type="CDD" id="cd03260">
    <property type="entry name" value="ABC_PstB_phosphate_transporter"/>
    <property type="match status" value="1"/>
</dbReference>
<dbReference type="Gene3D" id="3.40.50.300">
    <property type="entry name" value="P-loop containing nucleotide triphosphate hydrolases"/>
    <property type="match status" value="1"/>
</dbReference>
<dbReference type="InterPro" id="IPR003593">
    <property type="entry name" value="AAA+_ATPase"/>
</dbReference>
<dbReference type="InterPro" id="IPR003439">
    <property type="entry name" value="ABC_transporter-like_ATP-bd"/>
</dbReference>
<dbReference type="InterPro" id="IPR017871">
    <property type="entry name" value="ABC_transporter-like_CS"/>
</dbReference>
<dbReference type="InterPro" id="IPR027417">
    <property type="entry name" value="P-loop_NTPase"/>
</dbReference>
<dbReference type="InterPro" id="IPR005670">
    <property type="entry name" value="PstB-like"/>
</dbReference>
<dbReference type="NCBIfam" id="TIGR00972">
    <property type="entry name" value="3a0107s01c2"/>
    <property type="match status" value="1"/>
</dbReference>
<dbReference type="PANTHER" id="PTHR43423">
    <property type="entry name" value="ABC TRANSPORTER I FAMILY MEMBER 17"/>
    <property type="match status" value="1"/>
</dbReference>
<dbReference type="PANTHER" id="PTHR43423:SF1">
    <property type="entry name" value="ABC TRANSPORTER I FAMILY MEMBER 17"/>
    <property type="match status" value="1"/>
</dbReference>
<dbReference type="Pfam" id="PF00005">
    <property type="entry name" value="ABC_tran"/>
    <property type="match status" value="1"/>
</dbReference>
<dbReference type="SMART" id="SM00382">
    <property type="entry name" value="AAA"/>
    <property type="match status" value="1"/>
</dbReference>
<dbReference type="SUPFAM" id="SSF52540">
    <property type="entry name" value="P-loop containing nucleoside triphosphate hydrolases"/>
    <property type="match status" value="1"/>
</dbReference>
<dbReference type="PROSITE" id="PS00211">
    <property type="entry name" value="ABC_TRANSPORTER_1"/>
    <property type="match status" value="1"/>
</dbReference>
<dbReference type="PROSITE" id="PS50893">
    <property type="entry name" value="ABC_TRANSPORTER_2"/>
    <property type="match status" value="1"/>
</dbReference>
<dbReference type="PROSITE" id="PS51238">
    <property type="entry name" value="PSTB"/>
    <property type="match status" value="1"/>
</dbReference>
<organism>
    <name type="scientific">Halobacterium salinarum (strain ATCC 700922 / JCM 11081 / NRC-1)</name>
    <name type="common">Halobacterium halobium</name>
    <dbReference type="NCBI Taxonomy" id="64091"/>
    <lineage>
        <taxon>Archaea</taxon>
        <taxon>Methanobacteriati</taxon>
        <taxon>Methanobacteriota</taxon>
        <taxon>Stenosarchaea group</taxon>
        <taxon>Halobacteria</taxon>
        <taxon>Halobacteriales</taxon>
        <taxon>Halobacteriaceae</taxon>
        <taxon>Halobacterium</taxon>
        <taxon>Halobacterium salinarum NRC-34001</taxon>
    </lineage>
</organism>
<name>PSTB2_HALSA</name>
<keyword id="KW-0067">ATP-binding</keyword>
<keyword id="KW-1003">Cell membrane</keyword>
<keyword id="KW-0472">Membrane</keyword>
<keyword id="KW-0547">Nucleotide-binding</keyword>
<keyword id="KW-0592">Phosphate transport</keyword>
<keyword id="KW-1185">Reference proteome</keyword>
<keyword id="KW-1278">Translocase</keyword>
<keyword id="KW-0813">Transport</keyword>
<accession>Q9HML8</accession>
<comment type="function">
    <text evidence="1">Part of the ABC transporter complex PstSACB involved in phosphate import. Responsible for energy coupling to the transport system.</text>
</comment>
<comment type="catalytic activity">
    <reaction evidence="1">
        <text>phosphate(out) + ATP + H2O = ADP + 2 phosphate(in) + H(+)</text>
        <dbReference type="Rhea" id="RHEA:24440"/>
        <dbReference type="ChEBI" id="CHEBI:15377"/>
        <dbReference type="ChEBI" id="CHEBI:15378"/>
        <dbReference type="ChEBI" id="CHEBI:30616"/>
        <dbReference type="ChEBI" id="CHEBI:43474"/>
        <dbReference type="ChEBI" id="CHEBI:456216"/>
        <dbReference type="EC" id="7.3.2.1"/>
    </reaction>
</comment>
<comment type="subunit">
    <text evidence="1">The complex is composed of two ATP-binding proteins (PstB), two transmembrane proteins (PstC and PstA) and a solute-binding protein (PstS).</text>
</comment>
<comment type="subcellular location">
    <subcellularLocation>
        <location evidence="1">Cell membrane</location>
        <topology evidence="1">Peripheral membrane protein</topology>
    </subcellularLocation>
</comment>
<comment type="similarity">
    <text evidence="1">Belongs to the ABC transporter superfamily. Phosphate importer (TC 3.A.1.7) family.</text>
</comment>
<proteinExistence type="inferred from homology"/>
<feature type="chain" id="PRO_0000092944" description="Phosphate import ATP-binding protein PstB 2">
    <location>
        <begin position="1"/>
        <end position="345"/>
    </location>
</feature>
<feature type="domain" description="ABC transporter" evidence="1">
    <location>
        <begin position="86"/>
        <end position="340"/>
    </location>
</feature>
<feature type="region of interest" description="Disordered" evidence="2">
    <location>
        <begin position="1"/>
        <end position="57"/>
    </location>
</feature>
<feature type="compositionally biased region" description="Basic and acidic residues" evidence="2">
    <location>
        <begin position="8"/>
        <end position="18"/>
    </location>
</feature>
<feature type="compositionally biased region" description="Low complexity" evidence="2">
    <location>
        <begin position="19"/>
        <end position="35"/>
    </location>
</feature>
<feature type="compositionally biased region" description="Gly residues" evidence="2">
    <location>
        <begin position="42"/>
        <end position="52"/>
    </location>
</feature>
<feature type="binding site" evidence="1">
    <location>
        <begin position="118"/>
        <end position="125"/>
    </location>
    <ligand>
        <name>ATP</name>
        <dbReference type="ChEBI" id="CHEBI:30616"/>
    </ligand>
</feature>
<protein>
    <recommendedName>
        <fullName evidence="1">Phosphate import ATP-binding protein PstB 2</fullName>
        <ecNumber evidence="1">7.3.2.1</ecNumber>
    </recommendedName>
    <alternativeName>
        <fullName evidence="1">ABC phosphate transporter 2</fullName>
    </alternativeName>
    <alternativeName>
        <fullName evidence="1">Phosphate-transporting ATPase 2</fullName>
    </alternativeName>
</protein>
<gene>
    <name evidence="1" type="primary">pstB2</name>
    <name type="ordered locus">VNG_2482G</name>
</gene>
<evidence type="ECO:0000255" key="1">
    <source>
        <dbReference type="HAMAP-Rule" id="MF_01702"/>
    </source>
</evidence>
<evidence type="ECO:0000256" key="2">
    <source>
        <dbReference type="SAM" id="MobiDB-lite"/>
    </source>
</evidence>